<evidence type="ECO:0000255" key="1">
    <source>
        <dbReference type="HAMAP-Rule" id="MF_00500"/>
    </source>
</evidence>
<evidence type="ECO:0000256" key="2">
    <source>
        <dbReference type="SAM" id="MobiDB-lite"/>
    </source>
</evidence>
<evidence type="ECO:0000305" key="3"/>
<proteinExistence type="inferred from homology"/>
<protein>
    <recommendedName>
        <fullName evidence="1">Small ribosomal subunit protein bS20</fullName>
    </recommendedName>
    <alternativeName>
        <fullName evidence="3">30S ribosomal protein S20</fullName>
    </alternativeName>
</protein>
<sequence length="85" mass="9481">MPQIKSAIKRVKTQNATNKRNASELSKLRTAIKKFKNAVETDSKEDVSKLHLEAVRALDKAASKGLIHKNKAARDKSRLTKLANK</sequence>
<comment type="function">
    <text evidence="1">Binds directly to 16S ribosomal RNA.</text>
</comment>
<comment type="similarity">
    <text evidence="1">Belongs to the bacterial ribosomal protein bS20 family.</text>
</comment>
<keyword id="KW-1185">Reference proteome</keyword>
<keyword id="KW-0687">Ribonucleoprotein</keyword>
<keyword id="KW-0689">Ribosomal protein</keyword>
<keyword id="KW-0694">RNA-binding</keyword>
<keyword id="KW-0699">rRNA-binding</keyword>
<reference key="1">
    <citation type="journal article" date="2005" name="Proc. Natl. Acad. Sci. U.S.A.">
        <title>Complete genome sequence of the probiotic lactic acid bacterium Lactobacillus acidophilus NCFM.</title>
        <authorList>
            <person name="Altermann E."/>
            <person name="Russell W.M."/>
            <person name="Azcarate-Peril M.A."/>
            <person name="Barrangou R."/>
            <person name="Buck B.L."/>
            <person name="McAuliffe O."/>
            <person name="Souther N."/>
            <person name="Dobson A."/>
            <person name="Duong T."/>
            <person name="Callanan M."/>
            <person name="Lick S."/>
            <person name="Hamrick A."/>
            <person name="Cano R."/>
            <person name="Klaenhammer T.R."/>
        </authorList>
    </citation>
    <scope>NUCLEOTIDE SEQUENCE [LARGE SCALE GENOMIC DNA]</scope>
    <source>
        <strain>ATCC 700396 / NCK56 / N2 / NCFM</strain>
    </source>
</reference>
<name>RS20_LACAC</name>
<feature type="chain" id="PRO_0000167975" description="Small ribosomal subunit protein bS20">
    <location>
        <begin position="1"/>
        <end position="85"/>
    </location>
</feature>
<feature type="region of interest" description="Disordered" evidence="2">
    <location>
        <begin position="1"/>
        <end position="22"/>
    </location>
</feature>
<feature type="compositionally biased region" description="Polar residues" evidence="2">
    <location>
        <begin position="13"/>
        <end position="22"/>
    </location>
</feature>
<organism>
    <name type="scientific">Lactobacillus acidophilus (strain ATCC 700396 / NCK56 / N2 / NCFM)</name>
    <dbReference type="NCBI Taxonomy" id="272621"/>
    <lineage>
        <taxon>Bacteria</taxon>
        <taxon>Bacillati</taxon>
        <taxon>Bacillota</taxon>
        <taxon>Bacilli</taxon>
        <taxon>Lactobacillales</taxon>
        <taxon>Lactobacillaceae</taxon>
        <taxon>Lactobacillus</taxon>
    </lineage>
</organism>
<accession>Q5FKS2</accession>
<gene>
    <name evidence="1" type="primary">rpsT</name>
    <name type="ordered locus">LBA0841</name>
</gene>
<dbReference type="EMBL" id="CP000033">
    <property type="protein sequence ID" value="AAV42702.1"/>
    <property type="molecule type" value="Genomic_DNA"/>
</dbReference>
<dbReference type="RefSeq" id="WP_003546858.1">
    <property type="nucleotide sequence ID" value="NC_006814.3"/>
</dbReference>
<dbReference type="RefSeq" id="YP_193733.1">
    <property type="nucleotide sequence ID" value="NC_006814.3"/>
</dbReference>
<dbReference type="SMR" id="Q5FKS2"/>
<dbReference type="STRING" id="272621.LBA0841"/>
<dbReference type="GeneID" id="93290036"/>
<dbReference type="KEGG" id="lac:LBA0841"/>
<dbReference type="PATRIC" id="fig|272621.13.peg.803"/>
<dbReference type="eggNOG" id="COG0268">
    <property type="taxonomic scope" value="Bacteria"/>
</dbReference>
<dbReference type="HOGENOM" id="CLU_160655_1_1_9"/>
<dbReference type="OrthoDB" id="9808392at2"/>
<dbReference type="BioCyc" id="LACI272621:G1G49-852-MONOMER"/>
<dbReference type="Proteomes" id="UP000006381">
    <property type="component" value="Chromosome"/>
</dbReference>
<dbReference type="GO" id="GO:0005829">
    <property type="term" value="C:cytosol"/>
    <property type="evidence" value="ECO:0007669"/>
    <property type="project" value="TreeGrafter"/>
</dbReference>
<dbReference type="GO" id="GO:0015935">
    <property type="term" value="C:small ribosomal subunit"/>
    <property type="evidence" value="ECO:0007669"/>
    <property type="project" value="TreeGrafter"/>
</dbReference>
<dbReference type="GO" id="GO:0070181">
    <property type="term" value="F:small ribosomal subunit rRNA binding"/>
    <property type="evidence" value="ECO:0007669"/>
    <property type="project" value="TreeGrafter"/>
</dbReference>
<dbReference type="GO" id="GO:0003735">
    <property type="term" value="F:structural constituent of ribosome"/>
    <property type="evidence" value="ECO:0007669"/>
    <property type="project" value="InterPro"/>
</dbReference>
<dbReference type="GO" id="GO:0006412">
    <property type="term" value="P:translation"/>
    <property type="evidence" value="ECO:0007669"/>
    <property type="project" value="UniProtKB-UniRule"/>
</dbReference>
<dbReference type="FunFam" id="1.20.58.110:FF:000001">
    <property type="entry name" value="30S ribosomal protein S20"/>
    <property type="match status" value="1"/>
</dbReference>
<dbReference type="Gene3D" id="1.20.58.110">
    <property type="entry name" value="Ribosomal protein S20"/>
    <property type="match status" value="1"/>
</dbReference>
<dbReference type="HAMAP" id="MF_00500">
    <property type="entry name" value="Ribosomal_bS20"/>
    <property type="match status" value="1"/>
</dbReference>
<dbReference type="InterPro" id="IPR002583">
    <property type="entry name" value="Ribosomal_bS20"/>
</dbReference>
<dbReference type="InterPro" id="IPR036510">
    <property type="entry name" value="Ribosomal_bS20_sf"/>
</dbReference>
<dbReference type="NCBIfam" id="TIGR00029">
    <property type="entry name" value="S20"/>
    <property type="match status" value="1"/>
</dbReference>
<dbReference type="PANTHER" id="PTHR33398">
    <property type="entry name" value="30S RIBOSOMAL PROTEIN S20"/>
    <property type="match status" value="1"/>
</dbReference>
<dbReference type="PANTHER" id="PTHR33398:SF1">
    <property type="entry name" value="SMALL RIBOSOMAL SUBUNIT PROTEIN BS20C"/>
    <property type="match status" value="1"/>
</dbReference>
<dbReference type="Pfam" id="PF01649">
    <property type="entry name" value="Ribosomal_S20p"/>
    <property type="match status" value="1"/>
</dbReference>
<dbReference type="SUPFAM" id="SSF46992">
    <property type="entry name" value="Ribosomal protein S20"/>
    <property type="match status" value="1"/>
</dbReference>